<accession>A2CCG0</accession>
<evidence type="ECO:0000250" key="1"/>
<evidence type="ECO:0000255" key="2">
    <source>
        <dbReference type="HAMAP-Rule" id="MF_01057"/>
    </source>
</evidence>
<sequence length="236" mass="27713">MRQHVNPLSRFFQLPRPLPSPEEMFAQSSRPLHLDIGCARGGFLLGLAPLQPEWNHVGVEIRHPLVLSAERDRQELKLDNLRFLFCNVNVSLEEWLDALPRDQLQWVSIQFPDPWFKRRHQKRRVLQPSLLIALATALQPGRELFIQSDVLSVIEPMVMLIEQSNCFKRPGDDFHPWQRTNPMPVPTERERYVLDQGLQVYRRLYQRNDQQAPELSNLEALWQQVDNPSEEEHSDC</sequence>
<keyword id="KW-0489">Methyltransferase</keyword>
<keyword id="KW-0949">S-adenosyl-L-methionine</keyword>
<keyword id="KW-0808">Transferase</keyword>
<keyword id="KW-0819">tRNA processing</keyword>
<dbReference type="EC" id="2.1.1.33" evidence="2"/>
<dbReference type="EMBL" id="CP000554">
    <property type="protein sequence ID" value="ABM79170.1"/>
    <property type="molecule type" value="Genomic_DNA"/>
</dbReference>
<dbReference type="RefSeq" id="WP_011827024.1">
    <property type="nucleotide sequence ID" value="NC_008820.1"/>
</dbReference>
<dbReference type="SMR" id="A2CCG0"/>
<dbReference type="STRING" id="59922.P9303_24391"/>
<dbReference type="KEGG" id="pmf:P9303_24391"/>
<dbReference type="HOGENOM" id="CLU_050910_1_3_3"/>
<dbReference type="BioCyc" id="PMAR59922:G1G80-2134-MONOMER"/>
<dbReference type="UniPathway" id="UPA00989"/>
<dbReference type="Proteomes" id="UP000002274">
    <property type="component" value="Chromosome"/>
</dbReference>
<dbReference type="GO" id="GO:0043527">
    <property type="term" value="C:tRNA methyltransferase complex"/>
    <property type="evidence" value="ECO:0007669"/>
    <property type="project" value="TreeGrafter"/>
</dbReference>
<dbReference type="GO" id="GO:0008176">
    <property type="term" value="F:tRNA (guanine(46)-N7)-methyltransferase activity"/>
    <property type="evidence" value="ECO:0007669"/>
    <property type="project" value="UniProtKB-UniRule"/>
</dbReference>
<dbReference type="CDD" id="cd02440">
    <property type="entry name" value="AdoMet_MTases"/>
    <property type="match status" value="1"/>
</dbReference>
<dbReference type="Gene3D" id="3.40.50.150">
    <property type="entry name" value="Vaccinia Virus protein VP39"/>
    <property type="match status" value="1"/>
</dbReference>
<dbReference type="HAMAP" id="MF_01057">
    <property type="entry name" value="tRNA_methyltr_TrmB"/>
    <property type="match status" value="1"/>
</dbReference>
<dbReference type="InterPro" id="IPR029063">
    <property type="entry name" value="SAM-dependent_MTases_sf"/>
</dbReference>
<dbReference type="InterPro" id="IPR003358">
    <property type="entry name" value="tRNA_(Gua-N-7)_MeTrfase_Trmb"/>
</dbReference>
<dbReference type="InterPro" id="IPR055361">
    <property type="entry name" value="tRNA_methyltr_TrmB_bact"/>
</dbReference>
<dbReference type="NCBIfam" id="TIGR00091">
    <property type="entry name" value="tRNA (guanosine(46)-N7)-methyltransferase TrmB"/>
    <property type="match status" value="1"/>
</dbReference>
<dbReference type="PANTHER" id="PTHR23417">
    <property type="entry name" value="3-DEOXY-D-MANNO-OCTULOSONIC-ACID TRANSFERASE/TRNA GUANINE-N 7 - -METHYLTRANSFERASE"/>
    <property type="match status" value="1"/>
</dbReference>
<dbReference type="PANTHER" id="PTHR23417:SF21">
    <property type="entry name" value="TRNA (GUANINE-N(7)-)-METHYLTRANSFERASE"/>
    <property type="match status" value="1"/>
</dbReference>
<dbReference type="Pfam" id="PF02390">
    <property type="entry name" value="Methyltransf_4"/>
    <property type="match status" value="1"/>
</dbReference>
<dbReference type="SUPFAM" id="SSF53335">
    <property type="entry name" value="S-adenosyl-L-methionine-dependent methyltransferases"/>
    <property type="match status" value="1"/>
</dbReference>
<dbReference type="PROSITE" id="PS51625">
    <property type="entry name" value="SAM_MT_TRMB"/>
    <property type="match status" value="1"/>
</dbReference>
<organism>
    <name type="scientific">Prochlorococcus marinus (strain MIT 9303)</name>
    <dbReference type="NCBI Taxonomy" id="59922"/>
    <lineage>
        <taxon>Bacteria</taxon>
        <taxon>Bacillati</taxon>
        <taxon>Cyanobacteriota</taxon>
        <taxon>Cyanophyceae</taxon>
        <taxon>Synechococcales</taxon>
        <taxon>Prochlorococcaceae</taxon>
        <taxon>Prochlorococcus</taxon>
    </lineage>
</organism>
<proteinExistence type="inferred from homology"/>
<name>TRMB_PROM3</name>
<comment type="function">
    <text evidence="2">Catalyzes the formation of N(7)-methylguanine at position 46 (m7G46) in tRNA.</text>
</comment>
<comment type="catalytic activity">
    <reaction evidence="2">
        <text>guanosine(46) in tRNA + S-adenosyl-L-methionine = N(7)-methylguanosine(46) in tRNA + S-adenosyl-L-homocysteine</text>
        <dbReference type="Rhea" id="RHEA:42708"/>
        <dbReference type="Rhea" id="RHEA-COMP:10188"/>
        <dbReference type="Rhea" id="RHEA-COMP:10189"/>
        <dbReference type="ChEBI" id="CHEBI:57856"/>
        <dbReference type="ChEBI" id="CHEBI:59789"/>
        <dbReference type="ChEBI" id="CHEBI:74269"/>
        <dbReference type="ChEBI" id="CHEBI:74480"/>
        <dbReference type="EC" id="2.1.1.33"/>
    </reaction>
</comment>
<comment type="pathway">
    <text evidence="2">tRNA modification; N(7)-methylguanine-tRNA biosynthesis.</text>
</comment>
<comment type="similarity">
    <text evidence="2">Belongs to the class I-like SAM-binding methyltransferase superfamily. TrmB family.</text>
</comment>
<protein>
    <recommendedName>
        <fullName evidence="2">tRNA (guanine-N(7)-)-methyltransferase</fullName>
        <ecNumber evidence="2">2.1.1.33</ecNumber>
    </recommendedName>
    <alternativeName>
        <fullName evidence="2">tRNA (guanine(46)-N(7))-methyltransferase</fullName>
    </alternativeName>
    <alternativeName>
        <fullName evidence="2">tRNA(m7G46)-methyltransferase</fullName>
    </alternativeName>
</protein>
<feature type="chain" id="PRO_0000288199" description="tRNA (guanine-N(7)-)-methyltransferase">
    <location>
        <begin position="1"/>
        <end position="236"/>
    </location>
</feature>
<feature type="active site" evidence="1">
    <location>
        <position position="113"/>
    </location>
</feature>
<feature type="binding site" evidence="2">
    <location>
        <position position="35"/>
    </location>
    <ligand>
        <name>S-adenosyl-L-methionine</name>
        <dbReference type="ChEBI" id="CHEBI:59789"/>
    </ligand>
</feature>
<feature type="binding site" evidence="2">
    <location>
        <position position="60"/>
    </location>
    <ligand>
        <name>S-adenosyl-L-methionine</name>
        <dbReference type="ChEBI" id="CHEBI:59789"/>
    </ligand>
</feature>
<feature type="binding site" evidence="2">
    <location>
        <position position="87"/>
    </location>
    <ligand>
        <name>S-adenosyl-L-methionine</name>
        <dbReference type="ChEBI" id="CHEBI:59789"/>
    </ligand>
</feature>
<feature type="binding site" evidence="2">
    <location>
        <position position="113"/>
    </location>
    <ligand>
        <name>S-adenosyl-L-methionine</name>
        <dbReference type="ChEBI" id="CHEBI:59789"/>
    </ligand>
</feature>
<feature type="binding site" evidence="2">
    <location>
        <position position="117"/>
    </location>
    <ligand>
        <name>substrate</name>
    </ligand>
</feature>
<feature type="binding site" evidence="2">
    <location>
        <position position="149"/>
    </location>
    <ligand>
        <name>substrate</name>
    </ligand>
</feature>
<reference key="1">
    <citation type="journal article" date="2007" name="PLoS Genet.">
        <title>Patterns and implications of gene gain and loss in the evolution of Prochlorococcus.</title>
        <authorList>
            <person name="Kettler G.C."/>
            <person name="Martiny A.C."/>
            <person name="Huang K."/>
            <person name="Zucker J."/>
            <person name="Coleman M.L."/>
            <person name="Rodrigue S."/>
            <person name="Chen F."/>
            <person name="Lapidus A."/>
            <person name="Ferriera S."/>
            <person name="Johnson J."/>
            <person name="Steglich C."/>
            <person name="Church G.M."/>
            <person name="Richardson P."/>
            <person name="Chisholm S.W."/>
        </authorList>
    </citation>
    <scope>NUCLEOTIDE SEQUENCE [LARGE SCALE GENOMIC DNA]</scope>
    <source>
        <strain>MIT 9303</strain>
    </source>
</reference>
<gene>
    <name evidence="2" type="primary">trmB</name>
    <name type="ordered locus">P9303_24391</name>
</gene>